<name>RL17_PECCP</name>
<dbReference type="EMBL" id="CP001657">
    <property type="protein sequence ID" value="ACT14811.1"/>
    <property type="molecule type" value="Genomic_DNA"/>
</dbReference>
<dbReference type="RefSeq" id="WP_005970246.1">
    <property type="nucleotide sequence ID" value="NC_012917.1"/>
</dbReference>
<dbReference type="SMR" id="C6DFS2"/>
<dbReference type="STRING" id="561230.PC1_3796"/>
<dbReference type="GeneID" id="93391954"/>
<dbReference type="KEGG" id="pct:PC1_3796"/>
<dbReference type="eggNOG" id="COG0203">
    <property type="taxonomic scope" value="Bacteria"/>
</dbReference>
<dbReference type="HOGENOM" id="CLU_074407_2_0_6"/>
<dbReference type="OrthoDB" id="9809073at2"/>
<dbReference type="Proteomes" id="UP000002736">
    <property type="component" value="Chromosome"/>
</dbReference>
<dbReference type="GO" id="GO:0022625">
    <property type="term" value="C:cytosolic large ribosomal subunit"/>
    <property type="evidence" value="ECO:0007669"/>
    <property type="project" value="TreeGrafter"/>
</dbReference>
<dbReference type="GO" id="GO:0003735">
    <property type="term" value="F:structural constituent of ribosome"/>
    <property type="evidence" value="ECO:0007669"/>
    <property type="project" value="InterPro"/>
</dbReference>
<dbReference type="GO" id="GO:0006412">
    <property type="term" value="P:translation"/>
    <property type="evidence" value="ECO:0007669"/>
    <property type="project" value="UniProtKB-UniRule"/>
</dbReference>
<dbReference type="FunFam" id="3.90.1030.10:FF:000001">
    <property type="entry name" value="50S ribosomal protein L17"/>
    <property type="match status" value="1"/>
</dbReference>
<dbReference type="Gene3D" id="3.90.1030.10">
    <property type="entry name" value="Ribosomal protein L17"/>
    <property type="match status" value="1"/>
</dbReference>
<dbReference type="HAMAP" id="MF_01368">
    <property type="entry name" value="Ribosomal_bL17"/>
    <property type="match status" value="1"/>
</dbReference>
<dbReference type="InterPro" id="IPR000456">
    <property type="entry name" value="Ribosomal_bL17"/>
</dbReference>
<dbReference type="InterPro" id="IPR047859">
    <property type="entry name" value="Ribosomal_bL17_CS"/>
</dbReference>
<dbReference type="InterPro" id="IPR036373">
    <property type="entry name" value="Ribosomal_bL17_sf"/>
</dbReference>
<dbReference type="NCBIfam" id="TIGR00059">
    <property type="entry name" value="L17"/>
    <property type="match status" value="1"/>
</dbReference>
<dbReference type="PANTHER" id="PTHR14413:SF16">
    <property type="entry name" value="LARGE RIBOSOMAL SUBUNIT PROTEIN BL17M"/>
    <property type="match status" value="1"/>
</dbReference>
<dbReference type="PANTHER" id="PTHR14413">
    <property type="entry name" value="RIBOSOMAL PROTEIN L17"/>
    <property type="match status" value="1"/>
</dbReference>
<dbReference type="Pfam" id="PF01196">
    <property type="entry name" value="Ribosomal_L17"/>
    <property type="match status" value="1"/>
</dbReference>
<dbReference type="SUPFAM" id="SSF64263">
    <property type="entry name" value="Prokaryotic ribosomal protein L17"/>
    <property type="match status" value="1"/>
</dbReference>
<dbReference type="PROSITE" id="PS01167">
    <property type="entry name" value="RIBOSOMAL_L17"/>
    <property type="match status" value="1"/>
</dbReference>
<feature type="chain" id="PRO_1000215014" description="Large ribosomal subunit protein bL17">
    <location>
        <begin position="1"/>
        <end position="130"/>
    </location>
</feature>
<reference key="1">
    <citation type="submission" date="2009-07" db="EMBL/GenBank/DDBJ databases">
        <title>Complete sequence of Pectobacterium carotovorum subsp. carotovorum PC1.</title>
        <authorList>
            <consortium name="US DOE Joint Genome Institute"/>
            <person name="Lucas S."/>
            <person name="Copeland A."/>
            <person name="Lapidus A."/>
            <person name="Glavina del Rio T."/>
            <person name="Tice H."/>
            <person name="Bruce D."/>
            <person name="Goodwin L."/>
            <person name="Pitluck S."/>
            <person name="Munk A.C."/>
            <person name="Brettin T."/>
            <person name="Detter J.C."/>
            <person name="Han C."/>
            <person name="Tapia R."/>
            <person name="Larimer F."/>
            <person name="Land M."/>
            <person name="Hauser L."/>
            <person name="Kyrpides N."/>
            <person name="Mikhailova N."/>
            <person name="Balakrishnan V."/>
            <person name="Glasner J."/>
            <person name="Perna N.T."/>
        </authorList>
    </citation>
    <scope>NUCLEOTIDE SEQUENCE [LARGE SCALE GENOMIC DNA]</scope>
    <source>
        <strain>PC1</strain>
    </source>
</reference>
<protein>
    <recommendedName>
        <fullName evidence="1">Large ribosomal subunit protein bL17</fullName>
    </recommendedName>
    <alternativeName>
        <fullName evidence="2">50S ribosomal protein L17</fullName>
    </alternativeName>
</protein>
<gene>
    <name evidence="1" type="primary">rplQ</name>
    <name type="ordered locus">PC1_3796</name>
</gene>
<organism>
    <name type="scientific">Pectobacterium carotovorum subsp. carotovorum (strain PC1)</name>
    <dbReference type="NCBI Taxonomy" id="561230"/>
    <lineage>
        <taxon>Bacteria</taxon>
        <taxon>Pseudomonadati</taxon>
        <taxon>Pseudomonadota</taxon>
        <taxon>Gammaproteobacteria</taxon>
        <taxon>Enterobacterales</taxon>
        <taxon>Pectobacteriaceae</taxon>
        <taxon>Pectobacterium</taxon>
    </lineage>
</organism>
<proteinExistence type="inferred from homology"/>
<accession>C6DFS2</accession>
<sequence>MRHRKSGRQLNRNSSHRQAMFRNMASSLVRHEIIKTTLPKAKELRRVVEPLITLAKTDSVANRRLAFARTRDNEIVAKLFNELGPRFASRAGGYTRILKCGFRAGDNAPMAYIELVDRSVSQTEEVATAE</sequence>
<evidence type="ECO:0000255" key="1">
    <source>
        <dbReference type="HAMAP-Rule" id="MF_01368"/>
    </source>
</evidence>
<evidence type="ECO:0000305" key="2"/>
<keyword id="KW-0687">Ribonucleoprotein</keyword>
<keyword id="KW-0689">Ribosomal protein</keyword>
<comment type="subunit">
    <text evidence="1">Part of the 50S ribosomal subunit. Contacts protein L32.</text>
</comment>
<comment type="similarity">
    <text evidence="1">Belongs to the bacterial ribosomal protein bL17 family.</text>
</comment>